<evidence type="ECO:0000250" key="1">
    <source>
        <dbReference type="UniProtKB" id="Q6P3D0"/>
    </source>
</evidence>
<evidence type="ECO:0000250" key="2">
    <source>
        <dbReference type="UniProtKB" id="Q6TEC1"/>
    </source>
</evidence>
<evidence type="ECO:0000250" key="3">
    <source>
        <dbReference type="UniProtKB" id="Q96DE0"/>
    </source>
</evidence>
<evidence type="ECO:0000255" key="4">
    <source>
        <dbReference type="PROSITE-ProRule" id="PRU00794"/>
    </source>
</evidence>
<evidence type="ECO:0000269" key="5">
    <source>
    </source>
</evidence>
<evidence type="ECO:0000305" key="6"/>
<protein>
    <recommendedName>
        <fullName>U8 snoRNA-decapping enzyme</fullName>
        <ecNumber evidence="3">3.6.1.62</ecNumber>
    </recommendedName>
    <alternativeName>
        <fullName>IDP phosphatase</fullName>
        <shortName>IDPase</shortName>
        <ecNumber evidence="3">3.6.1.64</ecNumber>
    </alternativeName>
    <alternativeName>
        <fullName>Inosine diphosphate phosphatase</fullName>
    </alternativeName>
    <alternativeName>
        <fullName>Nucleoside diphosphate-linked moiety X motif 16</fullName>
        <shortName>Nudix motif 16</shortName>
    </alternativeName>
    <alternativeName>
        <fullName>m7GpppN-mRNA hydrolase</fullName>
    </alternativeName>
</protein>
<feature type="chain" id="PRO_0000280398" description="U8 snoRNA-decapping enzyme">
    <location>
        <begin position="1"/>
        <end position="195"/>
    </location>
</feature>
<feature type="domain" description="Nudix hydrolase" evidence="4">
    <location>
        <begin position="18"/>
        <end position="168"/>
    </location>
</feature>
<feature type="short sequence motif" description="Nudix box">
    <location>
        <begin position="61"/>
        <end position="82"/>
    </location>
</feature>
<feature type="binding site" evidence="2">
    <location>
        <position position="24"/>
    </location>
    <ligand>
        <name>substrate</name>
    </ligand>
</feature>
<feature type="binding site" evidence="2">
    <location>
        <position position="50"/>
    </location>
    <ligand>
        <name>substrate</name>
    </ligand>
</feature>
<feature type="binding site" evidence="3">
    <location>
        <position position="57"/>
    </location>
    <ligand>
        <name>substrate</name>
    </ligand>
</feature>
<feature type="binding site" evidence="3">
    <location>
        <position position="59"/>
    </location>
    <ligand>
        <name>Mn(2+)</name>
        <dbReference type="ChEBI" id="CHEBI:29035"/>
        <label>1</label>
    </ligand>
</feature>
<feature type="binding site" evidence="3">
    <location>
        <position position="76"/>
    </location>
    <ligand>
        <name>Mn(2+)</name>
        <dbReference type="ChEBI" id="CHEBI:29035"/>
        <label>2</label>
    </ligand>
</feature>
<feature type="binding site" evidence="2">
    <location>
        <position position="76"/>
    </location>
    <ligand>
        <name>Mn(2+)</name>
        <dbReference type="ChEBI" id="CHEBI:29035"/>
        <label>3</label>
    </ligand>
</feature>
<feature type="binding site" evidence="3">
    <location>
        <position position="80"/>
    </location>
    <ligand>
        <name>Mn(2+)</name>
        <dbReference type="ChEBI" id="CHEBI:29035"/>
        <label>1</label>
    </ligand>
</feature>
<feature type="binding site" evidence="2">
    <location>
        <position position="80"/>
    </location>
    <ligand>
        <name>Mn(2+)</name>
        <dbReference type="ChEBI" id="CHEBI:29035"/>
        <label>3</label>
    </ligand>
</feature>
<feature type="binding site" evidence="3">
    <location>
        <position position="99"/>
    </location>
    <ligand>
        <name>Mn(2+)</name>
        <dbReference type="ChEBI" id="CHEBI:29035"/>
        <label>4</label>
    </ligand>
</feature>
<feature type="binding site" evidence="2">
    <location>
        <position position="166"/>
    </location>
    <ligand>
        <name>substrate</name>
    </ligand>
</feature>
<feature type="binding site" evidence="2">
    <location>
        <position position="170"/>
    </location>
    <ligand>
        <name>substrate</name>
    </ligand>
</feature>
<feature type="binding site" evidence="3">
    <location>
        <position position="173"/>
    </location>
    <ligand>
        <name>Mn(2+)</name>
        <dbReference type="ChEBI" id="CHEBI:29035"/>
        <label>4</label>
    </ligand>
</feature>
<proteinExistence type="evidence at transcript level"/>
<gene>
    <name type="primary">NUDT16</name>
</gene>
<comment type="function">
    <text evidence="1 3">RNA-binding and decapping enzyme that catalyzes the cleavage of the cap structure of snoRNAs and mRNAs in a metal-dependent manner. Part of the U8 snoRNP complex that is required for the accumulation of mature 5.8S and 28S rRNA. Has diphosphatase activity and removes m7G and/or m227G caps from U8 snoRNA and leaves a 5'monophosphate on the RNA. Also catalyzes the cleavage of the cap structure on mRNAs. Does not hydrolyze cap analog structures like 7-methylguanosine nucleoside triphosphate (m7GpppG). Also hydrolysis m7G- and m227G U3-capped RNAs but with less efficiencies. Has broad substrate specificity with manganese or cobalt as cofactor and can act on various RNA species. Binds to the U8 snoRNA; metal is not required for RNA-binding. May play a role in the regulation of snoRNAs and mRNAs degradation. Also acts as a phosphatase; hydrolyzes the non-canonical purine nucleotides inosine diphosphate (IDP) and deoxyinosine diphosphate (dITP) as well as guanosine diphosphate (GDP), deoxyguanosine diphosphate (dGDP), xanthine diphosphate (XDP), inosine triphosphate (ITP) and deoxyinosine triphosphate (ITP) to their respective monophosphate derivatives and does not distinguish between the deoxy- and ribose forms. The order of activity with different substrates is IDP &gt; dIDP &gt;&gt; GDP = dGDP &gt; XDP = ITP = dITP. Binds strongly to GTP, ITP and XTP. Participates in the hydrolysis of dIDP/IDP and probably excludes non-canonical purines from RNA and DNA precursor pools, thus preventing their incorporation into RNA and DNA and avoiding chromosomal lesions (By similarity). Exhibits decapping activity towards NAD-capped RNAs and FAD-capped RNAs (By similarity). Exhibits decapping activity towards dpCoA-capped RNAs in vitro (By similarity).</text>
</comment>
<comment type="catalytic activity">
    <reaction evidence="3">
        <text>a 5'-end (N(7)-methyl 5'-triphosphoguanosine)-ribonucleoside in mRNA + H2O = N(7)-methyl-GDP + a 5'-end phospho-ribonucleoside in mRNA + 2 H(+)</text>
        <dbReference type="Rhea" id="RHEA:67484"/>
        <dbReference type="Rhea" id="RHEA-COMP:15692"/>
        <dbReference type="Rhea" id="RHEA-COMP:17167"/>
        <dbReference type="ChEBI" id="CHEBI:15377"/>
        <dbReference type="ChEBI" id="CHEBI:15378"/>
        <dbReference type="ChEBI" id="CHEBI:63714"/>
        <dbReference type="ChEBI" id="CHEBI:138282"/>
        <dbReference type="ChEBI" id="CHEBI:156461"/>
        <dbReference type="EC" id="3.6.1.62"/>
    </reaction>
    <physiologicalReaction direction="left-to-right" evidence="3">
        <dbReference type="Rhea" id="RHEA:67485"/>
    </physiologicalReaction>
</comment>
<comment type="catalytic activity">
    <reaction evidence="3">
        <text>IDP + H2O = IMP + phosphate + H(+)</text>
        <dbReference type="Rhea" id="RHEA:35207"/>
        <dbReference type="ChEBI" id="CHEBI:15377"/>
        <dbReference type="ChEBI" id="CHEBI:15378"/>
        <dbReference type="ChEBI" id="CHEBI:43474"/>
        <dbReference type="ChEBI" id="CHEBI:58053"/>
        <dbReference type="ChEBI" id="CHEBI:58280"/>
        <dbReference type="EC" id="3.6.1.64"/>
    </reaction>
    <physiologicalReaction direction="left-to-right" evidence="3">
        <dbReference type="Rhea" id="RHEA:35208"/>
    </physiologicalReaction>
</comment>
<comment type="catalytic activity">
    <reaction evidence="3">
        <text>dIDP + H2O = dIMP + phosphate + H(+)</text>
        <dbReference type="Rhea" id="RHEA:35211"/>
        <dbReference type="ChEBI" id="CHEBI:15377"/>
        <dbReference type="ChEBI" id="CHEBI:15378"/>
        <dbReference type="ChEBI" id="CHEBI:43474"/>
        <dbReference type="ChEBI" id="CHEBI:61194"/>
        <dbReference type="ChEBI" id="CHEBI:62286"/>
        <dbReference type="EC" id="3.6.1.64"/>
    </reaction>
    <physiologicalReaction direction="left-to-right" evidence="3">
        <dbReference type="Rhea" id="RHEA:35212"/>
    </physiologicalReaction>
</comment>
<comment type="catalytic activity">
    <reaction evidence="3">
        <text>a 5'-end NAD(+)-phospho-ribonucleoside in mRNA + H2O = a 5'-end phospho-ribonucleoside in mRNA + NAD(+) + H(+)</text>
        <dbReference type="Rhea" id="RHEA:60880"/>
        <dbReference type="Rhea" id="RHEA-COMP:15692"/>
        <dbReference type="Rhea" id="RHEA-COMP:15698"/>
        <dbReference type="ChEBI" id="CHEBI:15377"/>
        <dbReference type="ChEBI" id="CHEBI:15378"/>
        <dbReference type="ChEBI" id="CHEBI:57540"/>
        <dbReference type="ChEBI" id="CHEBI:138282"/>
        <dbReference type="ChEBI" id="CHEBI:144029"/>
    </reaction>
    <physiologicalReaction direction="left-to-right" evidence="3">
        <dbReference type="Rhea" id="RHEA:60881"/>
    </physiologicalReaction>
</comment>
<comment type="catalytic activity">
    <reaction evidence="3">
        <text>a 5'-end FAD-phospho-ribonucleoside in mRNA + H2O = a 5'-end phospho-adenosine-phospho-ribonucleoside in mRNA + FMN + 2 H(+)</text>
        <dbReference type="Rhea" id="RHEA:67588"/>
        <dbReference type="Rhea" id="RHEA-COMP:15719"/>
        <dbReference type="Rhea" id="RHEA-COMP:17275"/>
        <dbReference type="ChEBI" id="CHEBI:15377"/>
        <dbReference type="ChEBI" id="CHEBI:15378"/>
        <dbReference type="ChEBI" id="CHEBI:58210"/>
        <dbReference type="ChEBI" id="CHEBI:144051"/>
        <dbReference type="ChEBI" id="CHEBI:172372"/>
    </reaction>
    <physiologicalReaction direction="left-to-right" evidence="3">
        <dbReference type="Rhea" id="RHEA:67589"/>
    </physiologicalReaction>
</comment>
<comment type="catalytic activity">
    <reaction evidence="1">
        <text>a 5'-end CoA-ribonucleoside in mRNA + H2O = a 5'-end phospho-adenosine-phospho-ribonucleoside in mRNA + (R)-4'-phosphopantetheine + 2 H(+)</text>
        <dbReference type="Rhea" id="RHEA:67592"/>
        <dbReference type="Rhea" id="RHEA-COMP:15719"/>
        <dbReference type="Rhea" id="RHEA-COMP:17276"/>
        <dbReference type="ChEBI" id="CHEBI:15377"/>
        <dbReference type="ChEBI" id="CHEBI:15378"/>
        <dbReference type="ChEBI" id="CHEBI:61723"/>
        <dbReference type="ChEBI" id="CHEBI:144051"/>
        <dbReference type="ChEBI" id="CHEBI:172371"/>
    </reaction>
    <physiologicalReaction direction="left-to-right" evidence="1">
        <dbReference type="Rhea" id="RHEA:67593"/>
    </physiologicalReaction>
</comment>
<comment type="cofactor">
    <cofactor evidence="3">
        <name>Mg(2+)</name>
        <dbReference type="ChEBI" id="CHEBI:18420"/>
    </cofactor>
    <cofactor evidence="3">
        <name>Mn(2+)</name>
        <dbReference type="ChEBI" id="CHEBI:29035"/>
    </cofactor>
    <cofactor evidence="3">
        <name>Co(2+)</name>
        <dbReference type="ChEBI" id="CHEBI:48828"/>
    </cofactor>
    <text evidence="3">Binds 3 or 4 divalent metal cations. Acts specifically on U8 snoRNA with magnesium as cofactor. Has broad substrate specificity with bound manganese or cobalt (in vitro).</text>
</comment>
<comment type="subunit">
    <text evidence="3">Homodimer.</text>
</comment>
<comment type="subcellular location">
    <subcellularLocation>
        <location evidence="3">Nucleus</location>
    </subcellularLocation>
    <subcellularLocation>
        <location evidence="2">Nucleus</location>
        <location evidence="2">Nucleolus</location>
    </subcellularLocation>
    <subcellularLocation>
        <location evidence="2">Nucleus</location>
        <location evidence="2">Nucleoplasm</location>
    </subcellularLocation>
    <subcellularLocation>
        <location evidence="3">Cytoplasm</location>
    </subcellularLocation>
    <text evidence="2 3">Localized predominantly in the cytoplasm. Localized in nucleolus, and in a minor proportion in distinct foci in the nucleoplasm.</text>
</comment>
<comment type="developmental stage">
    <text evidence="5">NUDT16 mRNA concentrations are elevated 10-fold in the endometrium of sheep from day 5 to 9 of the estrous cycle and return to basal levels by day 11.</text>
</comment>
<comment type="induction">
    <text evidence="5">By steroid hormones.</text>
</comment>
<comment type="similarity">
    <text evidence="6">Belongs to the Nudix hydrolase family. NUDT16 subfamily.</text>
</comment>
<organism>
    <name type="scientific">Ovis aries</name>
    <name type="common">Sheep</name>
    <dbReference type="NCBI Taxonomy" id="9940"/>
    <lineage>
        <taxon>Eukaryota</taxon>
        <taxon>Metazoa</taxon>
        <taxon>Chordata</taxon>
        <taxon>Craniata</taxon>
        <taxon>Vertebrata</taxon>
        <taxon>Euteleostomi</taxon>
        <taxon>Mammalia</taxon>
        <taxon>Eutheria</taxon>
        <taxon>Laurasiatheria</taxon>
        <taxon>Artiodactyla</taxon>
        <taxon>Ruminantia</taxon>
        <taxon>Pecora</taxon>
        <taxon>Bovidae</taxon>
        <taxon>Caprinae</taxon>
        <taxon>Ovis</taxon>
    </lineage>
</organism>
<sequence>MAGMRRLELAEALHLGPGWRHACHAMLYAPDPGLLFGRIPLRYAVLMQMRFDGRLGFPGGFVDLRDGSLEDGLNRELGEELGEAAAAFRVERADYRSSHAGSRPRVVAHFYTKLLTLEQLTAVEMGAPRARDHGLEVLGLVRVPLYTLRDRVGGLPAFLENTFIGNAREQLLEAVQNLGLLEPGSFAHLKISTPP</sequence>
<accession>Q2V8X7</accession>
<keyword id="KW-0963">Cytoplasm</keyword>
<keyword id="KW-0378">Hydrolase</keyword>
<keyword id="KW-0460">Magnesium</keyword>
<keyword id="KW-0464">Manganese</keyword>
<keyword id="KW-0479">Metal-binding</keyword>
<keyword id="KW-0546">Nucleotide metabolism</keyword>
<keyword id="KW-0547">Nucleotide-binding</keyword>
<keyword id="KW-0539">Nucleus</keyword>
<keyword id="KW-1185">Reference proteome</keyword>
<keyword id="KW-0694">RNA-binding</keyword>
<reference key="1">
    <citation type="journal article" date="2006" name="Mol. Reprod. Dev.">
        <title>Steroid hormones acutely regulate expression of a Nudix protein-encoding gene in the endometrial epithelium of sheep.</title>
        <authorList>
            <person name="Ing N.H."/>
            <person name="Wolfskill R.L."/>
            <person name="Clark S."/>
            <person name="DeGraauw J.A."/>
            <person name="Gill C.A."/>
        </authorList>
    </citation>
    <scope>NUCLEOTIDE SEQUENCE [GENOMIC DNA / MRNA]</scope>
    <scope>INDUCTION</scope>
    <scope>DEVELOPMENTAL STAGE</scope>
    <source>
        <tissue>Endometrium</tissue>
    </source>
</reference>
<dbReference type="EC" id="3.6.1.62" evidence="3"/>
<dbReference type="EC" id="3.6.1.64" evidence="3"/>
<dbReference type="EMBL" id="DQ285424">
    <property type="protein sequence ID" value="ABB97473.1"/>
    <property type="molecule type" value="mRNA"/>
</dbReference>
<dbReference type="EMBL" id="DQ285425">
    <property type="protein sequence ID" value="ABB97474.1"/>
    <property type="molecule type" value="Genomic_DNA"/>
</dbReference>
<dbReference type="RefSeq" id="NP_001033102.1">
    <property type="nucleotide sequence ID" value="NM_001038013.1"/>
</dbReference>
<dbReference type="SMR" id="Q2V8X7"/>
<dbReference type="STRING" id="9940.ENSOARP00000009935"/>
<dbReference type="PaxDb" id="9940-ENSOARP00000009935"/>
<dbReference type="GeneID" id="654329"/>
<dbReference type="KEGG" id="oas:654329"/>
<dbReference type="CTD" id="131870"/>
<dbReference type="eggNOG" id="ENOG502S20E">
    <property type="taxonomic scope" value="Eukaryota"/>
</dbReference>
<dbReference type="OrthoDB" id="5950381at2759"/>
<dbReference type="Proteomes" id="UP000002356">
    <property type="component" value="Unplaced"/>
</dbReference>
<dbReference type="GO" id="GO:0005737">
    <property type="term" value="C:cytoplasm"/>
    <property type="evidence" value="ECO:0000250"/>
    <property type="project" value="UniProtKB"/>
</dbReference>
<dbReference type="GO" id="GO:0005730">
    <property type="term" value="C:nucleolus"/>
    <property type="evidence" value="ECO:0000250"/>
    <property type="project" value="UniProtKB"/>
</dbReference>
<dbReference type="GO" id="GO:0005654">
    <property type="term" value="C:nucleoplasm"/>
    <property type="evidence" value="ECO:0007669"/>
    <property type="project" value="UniProtKB-SubCell"/>
</dbReference>
<dbReference type="GO" id="GO:0005634">
    <property type="term" value="C:nucleus"/>
    <property type="evidence" value="ECO:0000250"/>
    <property type="project" value="UniProtKB"/>
</dbReference>
<dbReference type="GO" id="GO:0140933">
    <property type="term" value="F:5'-(N(7)-methylguanosine 5'-triphospho)-[mRNA] hydrolase activity"/>
    <property type="evidence" value="ECO:0000250"/>
    <property type="project" value="UniProtKB"/>
</dbReference>
<dbReference type="GO" id="GO:0050897">
    <property type="term" value="F:cobalt ion binding"/>
    <property type="evidence" value="ECO:0000250"/>
    <property type="project" value="UniProtKB"/>
</dbReference>
<dbReference type="GO" id="GO:0097383">
    <property type="term" value="F:dIDP phosphatase activity"/>
    <property type="evidence" value="ECO:0000250"/>
    <property type="project" value="UniProtKB"/>
</dbReference>
<dbReference type="GO" id="GO:0035870">
    <property type="term" value="F:dITP diphosphatase activity"/>
    <property type="evidence" value="ECO:0000250"/>
    <property type="project" value="UniProtKB"/>
</dbReference>
<dbReference type="GO" id="GO:1990003">
    <property type="term" value="F:IDP phosphatase activity"/>
    <property type="evidence" value="ECO:0000250"/>
    <property type="project" value="UniProtKB"/>
</dbReference>
<dbReference type="GO" id="GO:0000287">
    <property type="term" value="F:magnesium ion binding"/>
    <property type="evidence" value="ECO:0000250"/>
    <property type="project" value="UniProtKB"/>
</dbReference>
<dbReference type="GO" id="GO:0030145">
    <property type="term" value="F:manganese ion binding"/>
    <property type="evidence" value="ECO:0000250"/>
    <property type="project" value="UniProtKB"/>
</dbReference>
<dbReference type="GO" id="GO:0008235">
    <property type="term" value="F:metalloexopeptidase activity"/>
    <property type="evidence" value="ECO:0000250"/>
    <property type="project" value="UniProtKB"/>
</dbReference>
<dbReference type="GO" id="GO:0003729">
    <property type="term" value="F:mRNA binding"/>
    <property type="evidence" value="ECO:0000250"/>
    <property type="project" value="UniProtKB"/>
</dbReference>
<dbReference type="GO" id="GO:0000166">
    <property type="term" value="F:nucleotide binding"/>
    <property type="evidence" value="ECO:0007669"/>
    <property type="project" value="UniProtKB-KW"/>
</dbReference>
<dbReference type="GO" id="GO:1990174">
    <property type="term" value="F:phosphodiesterase decapping endonuclease activity"/>
    <property type="evidence" value="ECO:0007669"/>
    <property type="project" value="TreeGrafter"/>
</dbReference>
<dbReference type="GO" id="GO:0042803">
    <property type="term" value="F:protein homodimerization activity"/>
    <property type="evidence" value="ECO:0000250"/>
    <property type="project" value="UniProtKB"/>
</dbReference>
<dbReference type="GO" id="GO:0110152">
    <property type="term" value="F:RNA NAD+-cap (NAD+-forming) hydrolase activity"/>
    <property type="evidence" value="ECO:0007669"/>
    <property type="project" value="RHEA"/>
</dbReference>
<dbReference type="GO" id="GO:0030515">
    <property type="term" value="F:snoRNA binding"/>
    <property type="evidence" value="ECO:0000250"/>
    <property type="project" value="UniProtKB"/>
</dbReference>
<dbReference type="GO" id="GO:0035863">
    <property type="term" value="P:dITP catabolic process"/>
    <property type="evidence" value="ECO:0000250"/>
    <property type="project" value="UniProtKB"/>
</dbReference>
<dbReference type="GO" id="GO:0006402">
    <property type="term" value="P:mRNA catabolic process"/>
    <property type="evidence" value="ECO:0000250"/>
    <property type="project" value="UniProtKB"/>
</dbReference>
<dbReference type="GO" id="GO:0110155">
    <property type="term" value="P:NAD-cap decapping"/>
    <property type="evidence" value="ECO:0000250"/>
    <property type="project" value="UniProtKB"/>
</dbReference>
<dbReference type="GO" id="GO:2000233">
    <property type="term" value="P:negative regulation of rRNA processing"/>
    <property type="evidence" value="ECO:0000250"/>
    <property type="project" value="UniProtKB"/>
</dbReference>
<dbReference type="GO" id="GO:0090068">
    <property type="term" value="P:positive regulation of cell cycle process"/>
    <property type="evidence" value="ECO:0000250"/>
    <property type="project" value="UniProtKB"/>
</dbReference>
<dbReference type="GO" id="GO:0016077">
    <property type="term" value="P:sno(s)RNA catabolic process"/>
    <property type="evidence" value="ECO:0000250"/>
    <property type="project" value="UniProtKB"/>
</dbReference>
<dbReference type="CDD" id="cd18869">
    <property type="entry name" value="NUDIX_U8_SnoRNA_DE_Nudt16"/>
    <property type="match status" value="1"/>
</dbReference>
<dbReference type="FunFam" id="3.90.79.10:FF:000055">
    <property type="entry name" value="U8 snoRNA-decapping enzyme"/>
    <property type="match status" value="1"/>
</dbReference>
<dbReference type="Gene3D" id="3.90.79.10">
    <property type="entry name" value="Nucleoside Triphosphate Pyrophosphohydrolase"/>
    <property type="match status" value="1"/>
</dbReference>
<dbReference type="InterPro" id="IPR015797">
    <property type="entry name" value="NUDIX_hydrolase-like_dom_sf"/>
</dbReference>
<dbReference type="InterPro" id="IPR000086">
    <property type="entry name" value="NUDIX_hydrolase_dom"/>
</dbReference>
<dbReference type="InterPro" id="IPR054754">
    <property type="entry name" value="NudT16"/>
</dbReference>
<dbReference type="PANTHER" id="PTHR31699">
    <property type="entry name" value="NUDIX T16 FAMILY MEMBER"/>
    <property type="match status" value="1"/>
</dbReference>
<dbReference type="PANTHER" id="PTHR31699:SF5">
    <property type="entry name" value="U8 SNORNA-DECAPPING ENZYME"/>
    <property type="match status" value="1"/>
</dbReference>
<dbReference type="Pfam" id="PF22327">
    <property type="entry name" value="Nudt16-like"/>
    <property type="match status" value="1"/>
</dbReference>
<dbReference type="SUPFAM" id="SSF55811">
    <property type="entry name" value="Nudix"/>
    <property type="match status" value="1"/>
</dbReference>
<dbReference type="PROSITE" id="PS51462">
    <property type="entry name" value="NUDIX"/>
    <property type="match status" value="1"/>
</dbReference>
<name>NUD16_SHEEP</name>